<evidence type="ECO:0000255" key="1">
    <source>
        <dbReference type="HAMAP-Rule" id="MF_00204"/>
    </source>
</evidence>
<feature type="chain" id="PRO_1000077935" description="UvrABC system protein B">
    <location>
        <begin position="1"/>
        <end position="695"/>
    </location>
</feature>
<feature type="domain" description="Helicase ATP-binding" evidence="1">
    <location>
        <begin position="25"/>
        <end position="176"/>
    </location>
</feature>
<feature type="domain" description="Helicase C-terminal" evidence="1">
    <location>
        <begin position="454"/>
        <end position="617"/>
    </location>
</feature>
<feature type="domain" description="UVR" evidence="1">
    <location>
        <begin position="652"/>
        <end position="687"/>
    </location>
</feature>
<feature type="short sequence motif" description="Beta-hairpin">
    <location>
        <begin position="91"/>
        <end position="114"/>
    </location>
</feature>
<feature type="binding site" evidence="1">
    <location>
        <begin position="38"/>
        <end position="45"/>
    </location>
    <ligand>
        <name>ATP</name>
        <dbReference type="ChEBI" id="CHEBI:30616"/>
    </ligand>
</feature>
<protein>
    <recommendedName>
        <fullName evidence="1">UvrABC system protein B</fullName>
        <shortName evidence="1">Protein UvrB</shortName>
    </recommendedName>
    <alternativeName>
        <fullName evidence="1">Excinuclease ABC subunit B</fullName>
    </alternativeName>
</protein>
<dbReference type="EMBL" id="CP000240">
    <property type="protein sequence ID" value="ABD01788.1"/>
    <property type="molecule type" value="Genomic_DNA"/>
</dbReference>
<dbReference type="RefSeq" id="WP_011432445.1">
    <property type="nucleotide sequence ID" value="NC_007776.1"/>
</dbReference>
<dbReference type="SMR" id="Q2JN87"/>
<dbReference type="STRING" id="321332.CYB_0807"/>
<dbReference type="KEGG" id="cyb:CYB_0807"/>
<dbReference type="eggNOG" id="COG0556">
    <property type="taxonomic scope" value="Bacteria"/>
</dbReference>
<dbReference type="HOGENOM" id="CLU_009621_2_1_3"/>
<dbReference type="OrthoDB" id="9806651at2"/>
<dbReference type="Proteomes" id="UP000001938">
    <property type="component" value="Chromosome"/>
</dbReference>
<dbReference type="GO" id="GO:0005737">
    <property type="term" value="C:cytoplasm"/>
    <property type="evidence" value="ECO:0007669"/>
    <property type="project" value="UniProtKB-SubCell"/>
</dbReference>
<dbReference type="GO" id="GO:0009380">
    <property type="term" value="C:excinuclease repair complex"/>
    <property type="evidence" value="ECO:0007669"/>
    <property type="project" value="InterPro"/>
</dbReference>
<dbReference type="GO" id="GO:0005524">
    <property type="term" value="F:ATP binding"/>
    <property type="evidence" value="ECO:0007669"/>
    <property type="project" value="UniProtKB-UniRule"/>
</dbReference>
<dbReference type="GO" id="GO:0016887">
    <property type="term" value="F:ATP hydrolysis activity"/>
    <property type="evidence" value="ECO:0007669"/>
    <property type="project" value="InterPro"/>
</dbReference>
<dbReference type="GO" id="GO:0003677">
    <property type="term" value="F:DNA binding"/>
    <property type="evidence" value="ECO:0007669"/>
    <property type="project" value="UniProtKB-UniRule"/>
</dbReference>
<dbReference type="GO" id="GO:0009381">
    <property type="term" value="F:excinuclease ABC activity"/>
    <property type="evidence" value="ECO:0007669"/>
    <property type="project" value="UniProtKB-UniRule"/>
</dbReference>
<dbReference type="GO" id="GO:0004386">
    <property type="term" value="F:helicase activity"/>
    <property type="evidence" value="ECO:0007669"/>
    <property type="project" value="UniProtKB-KW"/>
</dbReference>
<dbReference type="GO" id="GO:0006289">
    <property type="term" value="P:nucleotide-excision repair"/>
    <property type="evidence" value="ECO:0007669"/>
    <property type="project" value="UniProtKB-UniRule"/>
</dbReference>
<dbReference type="GO" id="GO:0009432">
    <property type="term" value="P:SOS response"/>
    <property type="evidence" value="ECO:0007669"/>
    <property type="project" value="UniProtKB-UniRule"/>
</dbReference>
<dbReference type="CDD" id="cd17916">
    <property type="entry name" value="DEXHc_UvrB"/>
    <property type="match status" value="1"/>
</dbReference>
<dbReference type="CDD" id="cd18790">
    <property type="entry name" value="SF2_C_UvrB"/>
    <property type="match status" value="1"/>
</dbReference>
<dbReference type="Gene3D" id="3.40.50.300">
    <property type="entry name" value="P-loop containing nucleotide triphosphate hydrolases"/>
    <property type="match status" value="3"/>
</dbReference>
<dbReference type="Gene3D" id="4.10.860.10">
    <property type="entry name" value="UVR domain"/>
    <property type="match status" value="1"/>
</dbReference>
<dbReference type="HAMAP" id="MF_00204">
    <property type="entry name" value="UvrB"/>
    <property type="match status" value="1"/>
</dbReference>
<dbReference type="InterPro" id="IPR006935">
    <property type="entry name" value="Helicase/UvrB_N"/>
</dbReference>
<dbReference type="InterPro" id="IPR014001">
    <property type="entry name" value="Helicase_ATP-bd"/>
</dbReference>
<dbReference type="InterPro" id="IPR001650">
    <property type="entry name" value="Helicase_C-like"/>
</dbReference>
<dbReference type="InterPro" id="IPR027417">
    <property type="entry name" value="P-loop_NTPase"/>
</dbReference>
<dbReference type="InterPro" id="IPR001943">
    <property type="entry name" value="UVR_dom"/>
</dbReference>
<dbReference type="InterPro" id="IPR036876">
    <property type="entry name" value="UVR_dom_sf"/>
</dbReference>
<dbReference type="InterPro" id="IPR004807">
    <property type="entry name" value="UvrB"/>
</dbReference>
<dbReference type="InterPro" id="IPR041471">
    <property type="entry name" value="UvrB_inter"/>
</dbReference>
<dbReference type="InterPro" id="IPR024759">
    <property type="entry name" value="UvrB_YAD/RRR_dom"/>
</dbReference>
<dbReference type="NCBIfam" id="NF003673">
    <property type="entry name" value="PRK05298.1"/>
    <property type="match status" value="1"/>
</dbReference>
<dbReference type="PANTHER" id="PTHR24029">
    <property type="entry name" value="UVRABC SYSTEM PROTEIN B"/>
    <property type="match status" value="1"/>
</dbReference>
<dbReference type="PANTHER" id="PTHR24029:SF0">
    <property type="entry name" value="UVRABC SYSTEM PROTEIN B"/>
    <property type="match status" value="1"/>
</dbReference>
<dbReference type="Pfam" id="PF00271">
    <property type="entry name" value="Helicase_C"/>
    <property type="match status" value="1"/>
</dbReference>
<dbReference type="Pfam" id="PF04851">
    <property type="entry name" value="ResIII"/>
    <property type="match status" value="1"/>
</dbReference>
<dbReference type="Pfam" id="PF02151">
    <property type="entry name" value="UVR"/>
    <property type="match status" value="1"/>
</dbReference>
<dbReference type="Pfam" id="PF12344">
    <property type="entry name" value="UvrB"/>
    <property type="match status" value="1"/>
</dbReference>
<dbReference type="Pfam" id="PF17757">
    <property type="entry name" value="UvrB_inter"/>
    <property type="match status" value="1"/>
</dbReference>
<dbReference type="SMART" id="SM00487">
    <property type="entry name" value="DEXDc"/>
    <property type="match status" value="1"/>
</dbReference>
<dbReference type="SMART" id="SM00490">
    <property type="entry name" value="HELICc"/>
    <property type="match status" value="1"/>
</dbReference>
<dbReference type="SUPFAM" id="SSF46600">
    <property type="entry name" value="C-terminal UvrC-binding domain of UvrB"/>
    <property type="match status" value="1"/>
</dbReference>
<dbReference type="SUPFAM" id="SSF52540">
    <property type="entry name" value="P-loop containing nucleoside triphosphate hydrolases"/>
    <property type="match status" value="2"/>
</dbReference>
<dbReference type="PROSITE" id="PS51192">
    <property type="entry name" value="HELICASE_ATP_BIND_1"/>
    <property type="match status" value="1"/>
</dbReference>
<dbReference type="PROSITE" id="PS51194">
    <property type="entry name" value="HELICASE_CTER"/>
    <property type="match status" value="1"/>
</dbReference>
<dbReference type="PROSITE" id="PS50151">
    <property type="entry name" value="UVR"/>
    <property type="match status" value="1"/>
</dbReference>
<keyword id="KW-0067">ATP-binding</keyword>
<keyword id="KW-0963">Cytoplasm</keyword>
<keyword id="KW-0227">DNA damage</keyword>
<keyword id="KW-0228">DNA excision</keyword>
<keyword id="KW-0234">DNA repair</keyword>
<keyword id="KW-0267">Excision nuclease</keyword>
<keyword id="KW-0347">Helicase</keyword>
<keyword id="KW-0378">Hydrolase</keyword>
<keyword id="KW-0547">Nucleotide-binding</keyword>
<keyword id="KW-1185">Reference proteome</keyword>
<keyword id="KW-0742">SOS response</keyword>
<gene>
    <name evidence="1" type="primary">uvrB</name>
    <name type="ordered locus">CYB_0807</name>
</gene>
<reference key="1">
    <citation type="journal article" date="2007" name="ISME J.">
        <title>Population level functional diversity in a microbial community revealed by comparative genomic and metagenomic analyses.</title>
        <authorList>
            <person name="Bhaya D."/>
            <person name="Grossman A.R."/>
            <person name="Steunou A.-S."/>
            <person name="Khuri N."/>
            <person name="Cohan F.M."/>
            <person name="Hamamura N."/>
            <person name="Melendrez M.C."/>
            <person name="Bateson M.M."/>
            <person name="Ward D.M."/>
            <person name="Heidelberg J.F."/>
        </authorList>
    </citation>
    <scope>NUCLEOTIDE SEQUENCE [LARGE SCALE GENOMIC DNA]</scope>
    <source>
        <strain>JA-2-3B'a(2-13)</strain>
    </source>
</reference>
<organism>
    <name type="scientific">Synechococcus sp. (strain JA-2-3B'a(2-13))</name>
    <name type="common">Cyanobacteria bacterium Yellowstone B-Prime</name>
    <dbReference type="NCBI Taxonomy" id="321332"/>
    <lineage>
        <taxon>Bacteria</taxon>
        <taxon>Bacillati</taxon>
        <taxon>Cyanobacteriota</taxon>
        <taxon>Cyanophyceae</taxon>
        <taxon>Synechococcales</taxon>
        <taxon>Synechococcaceae</taxon>
        <taxon>Synechococcus</taxon>
    </lineage>
</organism>
<sequence>MSEFQLVSPYQPTGDQPKAIAGLVKSISEGHRFQTLLGATGTGKTFTIAHTIQQVGRPTLVMAHNKTLAAQLCNELRELFPHNAVEYFISYYDYYQPEAYVPSTDTYIAKSSSINDEIDMLRHSATRSLFERRDVIVVASVSCIYGLGMPEEYLKASIPFKVGQEINQRDVLRDLASIQYERNDLELVRGRFRLKGDVLEIVPAYEDRVIRIEFFGDEIEAIRLIDPVTGEILNSLSALRVYPARHFVTPEAQLERAILNIEQELEEQLALFRKEGKLLEAQRLEQRTRYDLEMLREVGYCNGIENYSRHLTGRKAGEPPACLVDYFKADDWLLVVDESHVTVPQIRGMYNGDRARKQVLVDHGFRLPSALDNRPLKAEEFWAKVHQCIFVSATPGNWELEQSEAQFETRVEDGKTLKFYVQGSGRVIEQVIRPTGVVDPEVHVRPTAGQVDDLLGEIYLRLERSQLGPAERVIVTTLTKRMAEDLTEYLQERGIRVRYLHSEITSIERIEILQDFREGAFDVLVGVNLLREGLDLPEVSLVAILDADKEGFLRAERSLIQMIGRAARNVRGMVVMYADTMTSSMARAIAETQRRREIQLQYNRQHNITPKPIVKKNSNAILSFLAISRKLNDPDLEKAFQAAQEIPLSEIPELIGQLELKMKEAAKNLEFEEAAQLRDRIKKLRQRLLGHPQGI</sequence>
<proteinExistence type="inferred from homology"/>
<name>UVRB_SYNJB</name>
<comment type="function">
    <text evidence="1">The UvrABC repair system catalyzes the recognition and processing of DNA lesions. A damage recognition complex composed of 2 UvrA and 2 UvrB subunits scans DNA for abnormalities. Upon binding of the UvrA(2)B(2) complex to a putative damaged site, the DNA wraps around one UvrB monomer. DNA wrap is dependent on ATP binding by UvrB and probably causes local melting of the DNA helix, facilitating insertion of UvrB beta-hairpin between the DNA strands. Then UvrB probes one DNA strand for the presence of a lesion. If a lesion is found the UvrA subunits dissociate and the UvrB-DNA preincision complex is formed. This complex is subsequently bound by UvrC and the second UvrB is released. If no lesion is found, the DNA wraps around the other UvrB subunit that will check the other stand for damage.</text>
</comment>
<comment type="subunit">
    <text evidence="1">Forms a heterotetramer with UvrA during the search for lesions. Interacts with UvrC in an incision complex.</text>
</comment>
<comment type="subcellular location">
    <subcellularLocation>
        <location evidence="1">Cytoplasm</location>
    </subcellularLocation>
</comment>
<comment type="domain">
    <text evidence="1">The beta-hairpin motif is involved in DNA binding.</text>
</comment>
<comment type="similarity">
    <text evidence="1">Belongs to the UvrB family.</text>
</comment>
<accession>Q2JN87</accession>